<protein>
    <recommendedName>
        <fullName evidence="1">Small ribosomal subunit protein bS21</fullName>
    </recommendedName>
    <alternativeName>
        <fullName evidence="2">30S ribosomal protein S21</fullName>
    </alternativeName>
</protein>
<sequence>MPSVNVRDMDSFEAALKMFKKQCEREGILSEIKKREHYEKPSVKRKKKVLAARKKLAKKMKMLSR</sequence>
<comment type="similarity">
    <text evidence="1">Belongs to the bacterial ribosomal protein bS21 family.</text>
</comment>
<feature type="chain" id="PRO_1000120674" description="Small ribosomal subunit protein bS21">
    <location>
        <begin position="1"/>
        <end position="65"/>
    </location>
</feature>
<evidence type="ECO:0000255" key="1">
    <source>
        <dbReference type="HAMAP-Rule" id="MF_00358"/>
    </source>
</evidence>
<evidence type="ECO:0000305" key="2"/>
<accession>B5YKU0</accession>
<keyword id="KW-1185">Reference proteome</keyword>
<keyword id="KW-0687">Ribonucleoprotein</keyword>
<keyword id="KW-0689">Ribosomal protein</keyword>
<organism>
    <name type="scientific">Thermodesulfovibrio yellowstonii (strain ATCC 51303 / DSM 11347 / YP87)</name>
    <dbReference type="NCBI Taxonomy" id="289376"/>
    <lineage>
        <taxon>Bacteria</taxon>
        <taxon>Pseudomonadati</taxon>
        <taxon>Nitrospirota</taxon>
        <taxon>Thermodesulfovibrionia</taxon>
        <taxon>Thermodesulfovibrionales</taxon>
        <taxon>Thermodesulfovibrionaceae</taxon>
        <taxon>Thermodesulfovibrio</taxon>
    </lineage>
</organism>
<name>RS21_THEYD</name>
<proteinExistence type="inferred from homology"/>
<reference key="1">
    <citation type="submission" date="2008-08" db="EMBL/GenBank/DDBJ databases">
        <title>The complete genome sequence of Thermodesulfovibrio yellowstonii strain ATCC 51303 / DSM 11347 / YP87.</title>
        <authorList>
            <person name="Dodson R.J."/>
            <person name="Durkin A.S."/>
            <person name="Wu M."/>
            <person name="Eisen J."/>
            <person name="Sutton G."/>
        </authorList>
    </citation>
    <scope>NUCLEOTIDE SEQUENCE [LARGE SCALE GENOMIC DNA]</scope>
    <source>
        <strain>ATCC 51303 / DSM 11347 / YP87</strain>
    </source>
</reference>
<gene>
    <name evidence="1" type="primary">rpsU</name>
    <name type="ordered locus">THEYE_A1026</name>
</gene>
<dbReference type="EMBL" id="CP001147">
    <property type="protein sequence ID" value="ACI21393.1"/>
    <property type="molecule type" value="Genomic_DNA"/>
</dbReference>
<dbReference type="RefSeq" id="WP_012546110.1">
    <property type="nucleotide sequence ID" value="NC_011296.1"/>
</dbReference>
<dbReference type="RefSeq" id="YP_002248855.1">
    <property type="nucleotide sequence ID" value="NC_011296.1"/>
</dbReference>
<dbReference type="SMR" id="B5YKU0"/>
<dbReference type="FunCoup" id="B5YKU0">
    <property type="interactions" value="424"/>
</dbReference>
<dbReference type="STRING" id="289376.THEYE_A1026"/>
<dbReference type="EnsemblBacteria" id="ACI21393">
    <property type="protein sequence ID" value="ACI21393"/>
    <property type="gene ID" value="THEYE_A1026"/>
</dbReference>
<dbReference type="KEGG" id="tye:THEYE_A1026"/>
<dbReference type="PATRIC" id="fig|289376.4.peg.1007"/>
<dbReference type="eggNOG" id="COG0828">
    <property type="taxonomic scope" value="Bacteria"/>
</dbReference>
<dbReference type="HOGENOM" id="CLU_159258_1_2_0"/>
<dbReference type="InParanoid" id="B5YKU0"/>
<dbReference type="OrthoDB" id="9799244at2"/>
<dbReference type="Proteomes" id="UP000000718">
    <property type="component" value="Chromosome"/>
</dbReference>
<dbReference type="GO" id="GO:1990904">
    <property type="term" value="C:ribonucleoprotein complex"/>
    <property type="evidence" value="ECO:0007669"/>
    <property type="project" value="UniProtKB-KW"/>
</dbReference>
<dbReference type="GO" id="GO:0005840">
    <property type="term" value="C:ribosome"/>
    <property type="evidence" value="ECO:0007669"/>
    <property type="project" value="UniProtKB-KW"/>
</dbReference>
<dbReference type="GO" id="GO:0003735">
    <property type="term" value="F:structural constituent of ribosome"/>
    <property type="evidence" value="ECO:0007669"/>
    <property type="project" value="InterPro"/>
</dbReference>
<dbReference type="GO" id="GO:0006412">
    <property type="term" value="P:translation"/>
    <property type="evidence" value="ECO:0007669"/>
    <property type="project" value="UniProtKB-UniRule"/>
</dbReference>
<dbReference type="Gene3D" id="1.20.5.1150">
    <property type="entry name" value="Ribosomal protein S8"/>
    <property type="match status" value="1"/>
</dbReference>
<dbReference type="HAMAP" id="MF_00358">
    <property type="entry name" value="Ribosomal_bS21"/>
    <property type="match status" value="1"/>
</dbReference>
<dbReference type="InterPro" id="IPR001911">
    <property type="entry name" value="Ribosomal_bS21"/>
</dbReference>
<dbReference type="InterPro" id="IPR038380">
    <property type="entry name" value="Ribosomal_bS21_sf"/>
</dbReference>
<dbReference type="NCBIfam" id="TIGR00030">
    <property type="entry name" value="S21p"/>
    <property type="match status" value="1"/>
</dbReference>
<dbReference type="PANTHER" id="PTHR21109">
    <property type="entry name" value="MITOCHONDRIAL 28S RIBOSOMAL PROTEIN S21"/>
    <property type="match status" value="1"/>
</dbReference>
<dbReference type="PANTHER" id="PTHR21109:SF22">
    <property type="entry name" value="SMALL RIBOSOMAL SUBUNIT PROTEIN BS21"/>
    <property type="match status" value="1"/>
</dbReference>
<dbReference type="Pfam" id="PF01165">
    <property type="entry name" value="Ribosomal_S21"/>
    <property type="match status" value="1"/>
</dbReference>
<dbReference type="PRINTS" id="PR00976">
    <property type="entry name" value="RIBOSOMALS21"/>
</dbReference>